<comment type="function">
    <text evidence="2 5">NDH-1 shuttles electrons from NADH, via FMN and iron-sulfur (Fe-S) centers, to quinones in the respiratory chain. The immediate electron acceptor for the enzyme in this species is believed to be ubiquinone. Couples the redox reaction to proton translocation (for every two electrons transferred, four hydrogen ions are translocated across the cytoplasmic membrane), and thus conserves the redox energy in a proton gradient.</text>
</comment>
<comment type="catalytic activity">
    <reaction evidence="2">
        <text>a quinone + NADH + 5 H(+)(in) = a quinol + NAD(+) + 4 H(+)(out)</text>
        <dbReference type="Rhea" id="RHEA:57888"/>
        <dbReference type="ChEBI" id="CHEBI:15378"/>
        <dbReference type="ChEBI" id="CHEBI:24646"/>
        <dbReference type="ChEBI" id="CHEBI:57540"/>
        <dbReference type="ChEBI" id="CHEBI:57945"/>
        <dbReference type="ChEBI" id="CHEBI:132124"/>
    </reaction>
</comment>
<comment type="cofactor">
    <cofactor evidence="2">
        <name>[4Fe-4S] cluster</name>
        <dbReference type="ChEBI" id="CHEBI:49883"/>
    </cofactor>
    <text evidence="2">Binds 1 [4Fe-4S] cluster.</text>
</comment>
<comment type="subunit">
    <text evidence="1 3">NDH-1 is composed of at least 14 different subunits, Nqo1 to Nqo14. The complex has a L-shaped structure, with the hydrophobic arm (subunits Nqo7, Nqo8, Nqo10 to Nqo14) embedded in the inner membrane and the hydrophilic peripheral arm (subunits Nqo1 to Nqo6, Nqo9) protruding into the bacterial cytoplasm. The hydrophilic domain contains all the redox centers (By similarity). NADH-quinone oxidoreductase forms a supercomplex with ubiquinol-cytochrome c reductase complex (complex III or cytochrome b-c1 complex) and cytochrome c oxidase (complex IV), which stabilizes the NADH-quinone oxidoreductase complex (PubMed:14610094).</text>
</comment>
<comment type="subcellular location">
    <subcellularLocation>
        <location evidence="5">Cell inner membrane</location>
        <topology evidence="5">Peripheral membrane protein</topology>
        <orientation evidence="5">Cytoplasmic side</orientation>
    </subcellularLocation>
</comment>
<comment type="similarity">
    <text evidence="2">Belongs to the complex I 20 kDa subunit family.</text>
</comment>
<accession>A1B497</accession>
<sequence length="175" mass="19505">MMTGLNTAGADRDLATAELNRELQDKGFLLTTTEDIINWARNGSLHWMTFGLACCAVEMMQTSMPRYDLERFGTAPRASPRQSDLMIVAGTLTNKMAPALRKVYDQMPEPRYVISMGSCANGGGYYHYSYSVVRGCDRIVPVDIYVPGCPPTAEALLYGILQLQRRIRRTGTLVR</sequence>
<evidence type="ECO:0000250" key="1"/>
<evidence type="ECO:0000255" key="2">
    <source>
        <dbReference type="HAMAP-Rule" id="MF_01356"/>
    </source>
</evidence>
<evidence type="ECO:0000269" key="3">
    <source>
    </source>
</evidence>
<evidence type="ECO:0000303" key="4">
    <source>
    </source>
</evidence>
<evidence type="ECO:0000305" key="5">
    <source>
    </source>
</evidence>
<evidence type="ECO:0007829" key="6">
    <source>
        <dbReference type="PDB" id="8QBY"/>
    </source>
</evidence>
<keyword id="KW-0002">3D-structure</keyword>
<keyword id="KW-0004">4Fe-4S</keyword>
<keyword id="KW-0997">Cell inner membrane</keyword>
<keyword id="KW-1003">Cell membrane</keyword>
<keyword id="KW-0408">Iron</keyword>
<keyword id="KW-0411">Iron-sulfur</keyword>
<keyword id="KW-0472">Membrane</keyword>
<keyword id="KW-0479">Metal-binding</keyword>
<keyword id="KW-0520">NAD</keyword>
<keyword id="KW-0874">Quinone</keyword>
<keyword id="KW-1185">Reference proteome</keyword>
<keyword id="KW-1278">Translocase</keyword>
<keyword id="KW-0813">Transport</keyword>
<keyword id="KW-0830">Ubiquinone</keyword>
<organism>
    <name type="scientific">Paracoccus denitrificans (strain Pd 1222)</name>
    <dbReference type="NCBI Taxonomy" id="318586"/>
    <lineage>
        <taxon>Bacteria</taxon>
        <taxon>Pseudomonadati</taxon>
        <taxon>Pseudomonadota</taxon>
        <taxon>Alphaproteobacteria</taxon>
        <taxon>Rhodobacterales</taxon>
        <taxon>Paracoccaceae</taxon>
        <taxon>Paracoccus</taxon>
    </lineage>
</organism>
<reference key="1">
    <citation type="submission" date="2006-12" db="EMBL/GenBank/DDBJ databases">
        <title>Complete sequence of chromosome 1 of Paracoccus denitrificans PD1222.</title>
        <authorList>
            <person name="Copeland A."/>
            <person name="Lucas S."/>
            <person name="Lapidus A."/>
            <person name="Barry K."/>
            <person name="Detter J.C."/>
            <person name="Glavina del Rio T."/>
            <person name="Hammon N."/>
            <person name="Israni S."/>
            <person name="Dalin E."/>
            <person name="Tice H."/>
            <person name="Pitluck S."/>
            <person name="Munk A.C."/>
            <person name="Brettin T."/>
            <person name="Bruce D."/>
            <person name="Han C."/>
            <person name="Tapia R."/>
            <person name="Gilna P."/>
            <person name="Schmutz J."/>
            <person name="Larimer F."/>
            <person name="Land M."/>
            <person name="Hauser L."/>
            <person name="Kyrpides N."/>
            <person name="Lykidis A."/>
            <person name="Spiro S."/>
            <person name="Richardson D.J."/>
            <person name="Moir J.W.B."/>
            <person name="Ferguson S.J."/>
            <person name="van Spanning R.J.M."/>
            <person name="Richardson P."/>
        </authorList>
    </citation>
    <scope>NUCLEOTIDE SEQUENCE [LARGE SCALE GENOMIC DNA]</scope>
    <source>
        <strain>Pd 1222</strain>
    </source>
</reference>
<reference key="2">
    <citation type="journal article" date="2004" name="J. Biol. Chem.">
        <title>Assembly of respiratory complexes I, III, and IV into NADH oxidase supercomplex stabilizes complex I in Paracoccus denitrificans.</title>
        <authorList>
            <person name="Stroh A."/>
            <person name="Anderka O."/>
            <person name="Pfeiffer K."/>
            <person name="Yagi T."/>
            <person name="Finel M."/>
            <person name="Ludwig B."/>
            <person name="Schagger H."/>
        </authorList>
    </citation>
    <scope>IDENTIFICATION IN NADH OXIDASE SUPERCOMPLEX</scope>
    <scope>FUNCTION</scope>
    <scope>SUBUNIT</scope>
    <scope>SUBCELLULAR LOCATION</scope>
</reference>
<proteinExistence type="evidence at protein level"/>
<gene>
    <name evidence="2" type="primary">nuoB</name>
    <name evidence="4" type="synonym">nqo6</name>
    <name type="ordered locus">Pden_2249</name>
</gene>
<dbReference type="EC" id="7.1.1.-" evidence="2"/>
<dbReference type="EMBL" id="CP000489">
    <property type="protein sequence ID" value="ABL70341.1"/>
    <property type="molecule type" value="Genomic_DNA"/>
</dbReference>
<dbReference type="PDB" id="8QBY">
    <property type="method" value="EM"/>
    <property type="resolution" value="2.30 A"/>
    <property type="chains" value="B=1-175"/>
</dbReference>
<dbReference type="PDBsum" id="8QBY"/>
<dbReference type="EMDB" id="EMD-18324"/>
<dbReference type="SMR" id="A1B497"/>
<dbReference type="STRING" id="318586.Pden_2249"/>
<dbReference type="EnsemblBacteria" id="ABL70341">
    <property type="protein sequence ID" value="ABL70341"/>
    <property type="gene ID" value="Pden_2249"/>
</dbReference>
<dbReference type="KEGG" id="pde:Pden_2249"/>
<dbReference type="eggNOG" id="COG0377">
    <property type="taxonomic scope" value="Bacteria"/>
</dbReference>
<dbReference type="HOGENOM" id="CLU_055737_7_0_5"/>
<dbReference type="Proteomes" id="UP000000361">
    <property type="component" value="Chromosome 1"/>
</dbReference>
<dbReference type="GO" id="GO:0005886">
    <property type="term" value="C:plasma membrane"/>
    <property type="evidence" value="ECO:0007669"/>
    <property type="project" value="UniProtKB-SubCell"/>
</dbReference>
<dbReference type="GO" id="GO:0045271">
    <property type="term" value="C:respiratory chain complex I"/>
    <property type="evidence" value="ECO:0007669"/>
    <property type="project" value="TreeGrafter"/>
</dbReference>
<dbReference type="GO" id="GO:0051539">
    <property type="term" value="F:4 iron, 4 sulfur cluster binding"/>
    <property type="evidence" value="ECO:0007669"/>
    <property type="project" value="UniProtKB-KW"/>
</dbReference>
<dbReference type="GO" id="GO:0005506">
    <property type="term" value="F:iron ion binding"/>
    <property type="evidence" value="ECO:0007669"/>
    <property type="project" value="UniProtKB-UniRule"/>
</dbReference>
<dbReference type="GO" id="GO:0008137">
    <property type="term" value="F:NADH dehydrogenase (ubiquinone) activity"/>
    <property type="evidence" value="ECO:0007669"/>
    <property type="project" value="InterPro"/>
</dbReference>
<dbReference type="GO" id="GO:0050136">
    <property type="term" value="F:NADH:ubiquinone reductase (non-electrogenic) activity"/>
    <property type="evidence" value="ECO:0007669"/>
    <property type="project" value="UniProtKB-UniRule"/>
</dbReference>
<dbReference type="GO" id="GO:0048038">
    <property type="term" value="F:quinone binding"/>
    <property type="evidence" value="ECO:0007669"/>
    <property type="project" value="UniProtKB-KW"/>
</dbReference>
<dbReference type="GO" id="GO:0009060">
    <property type="term" value="P:aerobic respiration"/>
    <property type="evidence" value="ECO:0007669"/>
    <property type="project" value="TreeGrafter"/>
</dbReference>
<dbReference type="GO" id="GO:0015990">
    <property type="term" value="P:electron transport coupled proton transport"/>
    <property type="evidence" value="ECO:0007669"/>
    <property type="project" value="TreeGrafter"/>
</dbReference>
<dbReference type="FunFam" id="3.40.50.12280:FF:000001">
    <property type="entry name" value="NADH-quinone oxidoreductase subunit B 2"/>
    <property type="match status" value="1"/>
</dbReference>
<dbReference type="Gene3D" id="3.40.50.12280">
    <property type="match status" value="1"/>
</dbReference>
<dbReference type="HAMAP" id="MF_01356">
    <property type="entry name" value="NDH1_NuoB"/>
    <property type="match status" value="1"/>
</dbReference>
<dbReference type="InterPro" id="IPR006137">
    <property type="entry name" value="NADH_UbQ_OxRdtase-like_20kDa"/>
</dbReference>
<dbReference type="InterPro" id="IPR006138">
    <property type="entry name" value="NADH_UQ_OxRdtase_20Kd_su"/>
</dbReference>
<dbReference type="NCBIfam" id="TIGR01957">
    <property type="entry name" value="nuoB_fam"/>
    <property type="match status" value="1"/>
</dbReference>
<dbReference type="NCBIfam" id="NF005012">
    <property type="entry name" value="PRK06411.1"/>
    <property type="match status" value="1"/>
</dbReference>
<dbReference type="PANTHER" id="PTHR11995">
    <property type="entry name" value="NADH DEHYDROGENASE"/>
    <property type="match status" value="1"/>
</dbReference>
<dbReference type="PANTHER" id="PTHR11995:SF14">
    <property type="entry name" value="NADH DEHYDROGENASE [UBIQUINONE] IRON-SULFUR PROTEIN 7, MITOCHONDRIAL"/>
    <property type="match status" value="1"/>
</dbReference>
<dbReference type="Pfam" id="PF01058">
    <property type="entry name" value="Oxidored_q6"/>
    <property type="match status" value="1"/>
</dbReference>
<dbReference type="SUPFAM" id="SSF56770">
    <property type="entry name" value="HydA/Nqo6-like"/>
    <property type="match status" value="1"/>
</dbReference>
<dbReference type="PROSITE" id="PS01150">
    <property type="entry name" value="COMPLEX1_20K"/>
    <property type="match status" value="1"/>
</dbReference>
<name>NUOB_PARDP</name>
<protein>
    <recommendedName>
        <fullName evidence="2">NADH-quinone oxidoreductase subunit B</fullName>
        <ecNumber evidence="2">7.1.1.-</ecNumber>
    </recommendedName>
    <alternativeName>
        <fullName evidence="2">NADH dehydrogenase I subunit B</fullName>
    </alternativeName>
    <alternativeName>
        <fullName>NADH dehydrogenase I, subunit 6</fullName>
    </alternativeName>
    <alternativeName>
        <fullName>NADH-quinone oxidoreductase subunit 6</fullName>
        <shortName>NQO6</shortName>
    </alternativeName>
    <alternativeName>
        <fullName evidence="2">NDH-1 subunit B</fullName>
    </alternativeName>
    <alternativeName>
        <fullName>NDH-1, subunit 6</fullName>
    </alternativeName>
</protein>
<feature type="chain" id="PRO_0000358441" description="NADH-quinone oxidoreductase subunit B">
    <location>
        <begin position="1"/>
        <end position="175"/>
    </location>
</feature>
<feature type="binding site" evidence="2">
    <location>
        <position position="54"/>
    </location>
    <ligand>
        <name>[4Fe-4S] cluster</name>
        <dbReference type="ChEBI" id="CHEBI:49883"/>
    </ligand>
</feature>
<feature type="binding site" evidence="2">
    <location>
        <position position="55"/>
    </location>
    <ligand>
        <name>[4Fe-4S] cluster</name>
        <dbReference type="ChEBI" id="CHEBI:49883"/>
    </ligand>
</feature>
<feature type="binding site" evidence="2">
    <location>
        <position position="119"/>
    </location>
    <ligand>
        <name>[4Fe-4S] cluster</name>
        <dbReference type="ChEBI" id="CHEBI:49883"/>
    </ligand>
</feature>
<feature type="binding site" evidence="2">
    <location>
        <position position="149"/>
    </location>
    <ligand>
        <name>[4Fe-4S] cluster</name>
        <dbReference type="ChEBI" id="CHEBI:49883"/>
    </ligand>
</feature>
<feature type="helix" evidence="6">
    <location>
        <begin position="30"/>
        <end position="43"/>
    </location>
</feature>
<feature type="helix" evidence="6">
    <location>
        <begin position="55"/>
        <end position="63"/>
    </location>
</feature>
<feature type="turn" evidence="6">
    <location>
        <begin position="65"/>
        <end position="67"/>
    </location>
</feature>
<feature type="helix" evidence="6">
    <location>
        <begin position="69"/>
        <end position="72"/>
    </location>
</feature>
<feature type="strand" evidence="6">
    <location>
        <begin position="76"/>
        <end position="79"/>
    </location>
</feature>
<feature type="helix" evidence="6">
    <location>
        <begin position="80"/>
        <end position="82"/>
    </location>
</feature>
<feature type="strand" evidence="6">
    <location>
        <begin position="84"/>
        <end position="90"/>
    </location>
</feature>
<feature type="turn" evidence="6">
    <location>
        <begin position="94"/>
        <end position="96"/>
    </location>
</feature>
<feature type="helix" evidence="6">
    <location>
        <begin position="97"/>
        <end position="105"/>
    </location>
</feature>
<feature type="strand" evidence="6">
    <location>
        <begin position="112"/>
        <end position="117"/>
    </location>
</feature>
<feature type="helix" evidence="6">
    <location>
        <begin position="118"/>
        <end position="122"/>
    </location>
</feature>
<feature type="helix" evidence="6">
    <location>
        <begin position="124"/>
        <end position="126"/>
    </location>
</feature>
<feature type="strand" evidence="6">
    <location>
        <begin position="130"/>
        <end position="132"/>
    </location>
</feature>
<feature type="helix" evidence="6">
    <location>
        <begin position="136"/>
        <end position="138"/>
    </location>
</feature>
<feature type="strand" evidence="6">
    <location>
        <begin position="143"/>
        <end position="146"/>
    </location>
</feature>
<feature type="strand" evidence="6">
    <location>
        <begin position="148"/>
        <end position="150"/>
    </location>
</feature>
<feature type="helix" evidence="6">
    <location>
        <begin position="153"/>
        <end position="170"/>
    </location>
</feature>